<comment type="function">
    <text evidence="1">Forms oxaloacetate, a four-carbon dicarboxylic acid source for the tricarboxylic acid cycle.</text>
</comment>
<comment type="catalytic activity">
    <reaction evidence="1">
        <text>oxaloacetate + phosphate = phosphoenolpyruvate + hydrogencarbonate</text>
        <dbReference type="Rhea" id="RHEA:28370"/>
        <dbReference type="ChEBI" id="CHEBI:16452"/>
        <dbReference type="ChEBI" id="CHEBI:17544"/>
        <dbReference type="ChEBI" id="CHEBI:43474"/>
        <dbReference type="ChEBI" id="CHEBI:58702"/>
        <dbReference type="EC" id="4.1.1.31"/>
    </reaction>
</comment>
<comment type="cofactor">
    <cofactor evidence="1">
        <name>Mg(2+)</name>
        <dbReference type="ChEBI" id="CHEBI:18420"/>
    </cofactor>
</comment>
<comment type="similarity">
    <text evidence="1">Belongs to the PEPCase type 1 family.</text>
</comment>
<sequence>MSQDPFALLKAEVDLLGRLLGEAIRTLSGERFFALVEEVRALAKARRQGDEAAGEALLARVEGLSTEEAEALVRAFTHYFHLVNLAEERHRVRVNRLRAQAETLESPRPEGFLALAKALKERGLSLEEAEAHLNRLELLLTFTAHPTETRRRTLRHHLEALQRELEAGDRERLAARVALLYGTEEVRKARPTVEDEIKGGLYYLPTTLWEAVPRVVAGLEAALERVYGRRPRLKSPVRFRSWIGGDRDGNPFVTPEVTAFAGRYAREVARRRFLEALEDLVRDLSLAEARVPVPREVRERGEGVERFMGEPYRRYFAALYRALEREEATTEGLLAALKAAERGLREVGLGRVAEAFLDPLEARLSAFGLELAPLDLREESGRLLEAAAELLRVGGVHPDFLALPQEERERLLTEELKTARPLLPVGEAPEGEALRVALGALKAWRDKGAHVVSMTHHPEDLLAVFLLAREVGLYRPGRPLPFDVVPLFETLEDLRRAPGVLRRLLENPVFLAHARGRGGVEVMIGYSDSNKDAGFLMANLALYEAQEALSRVGEEVGLPVYFFHGRGTSTARGGGPAGRAIASLPPRSVGRRIRLTEQGEALADRYSHPDLAVRHLEQMLYHFALAALGPGQEPEARWREALAQAAEESTRRYRALLQEEGFFDFFEAFTPIREIGELPIASRPVYRRGRVRDIRDLRAIPWVMAWTQVRVLLPGWYGLSALEELPLDLLREMYRGWPFFASTLEAAAMALAKADMGVARLYLRLVPEPLRFFYRRLAEEHARTVALLEAVFQAPLLHNQRTLERQIRLRNPYVDPINIVQVELLRRYRAPGGKEDEALRRALLLSILGVAAGLRNAG</sequence>
<reference key="1">
    <citation type="journal article" date="2004" name="Nat. Biotechnol.">
        <title>The genome sequence of the extreme thermophile Thermus thermophilus.</title>
        <authorList>
            <person name="Henne A."/>
            <person name="Brueggemann H."/>
            <person name="Raasch C."/>
            <person name="Wiezer A."/>
            <person name="Hartsch T."/>
            <person name="Liesegang H."/>
            <person name="Johann A."/>
            <person name="Lienard T."/>
            <person name="Gohl O."/>
            <person name="Martinez-Arias R."/>
            <person name="Jacobi C."/>
            <person name="Starkuviene V."/>
            <person name="Schlenczeck S."/>
            <person name="Dencker S."/>
            <person name="Huber R."/>
            <person name="Klenk H.-P."/>
            <person name="Kramer W."/>
            <person name="Merkl R."/>
            <person name="Gottschalk G."/>
            <person name="Fritz H.-J."/>
        </authorList>
    </citation>
    <scope>NUCLEOTIDE SEQUENCE [LARGE SCALE GENOMIC DNA]</scope>
    <source>
        <strain>ATCC BAA-163 / DSM 7039 / HB27</strain>
    </source>
</reference>
<evidence type="ECO:0000255" key="1">
    <source>
        <dbReference type="HAMAP-Rule" id="MF_00595"/>
    </source>
</evidence>
<feature type="chain" id="PRO_0000166644" description="Phosphoenolpyruvate carboxylase">
    <location>
        <begin position="1"/>
        <end position="858"/>
    </location>
</feature>
<feature type="active site" evidence="1">
    <location>
        <position position="145"/>
    </location>
</feature>
<feature type="active site" evidence="1">
    <location>
        <position position="531"/>
    </location>
</feature>
<proteinExistence type="inferred from homology"/>
<name>CAPP_THET2</name>
<organism>
    <name type="scientific">Thermus thermophilus (strain ATCC BAA-163 / DSM 7039 / HB27)</name>
    <dbReference type="NCBI Taxonomy" id="262724"/>
    <lineage>
        <taxon>Bacteria</taxon>
        <taxon>Thermotogati</taxon>
        <taxon>Deinococcota</taxon>
        <taxon>Deinococci</taxon>
        <taxon>Thermales</taxon>
        <taxon>Thermaceae</taxon>
        <taxon>Thermus</taxon>
    </lineage>
</organism>
<dbReference type="EC" id="4.1.1.31" evidence="1"/>
<dbReference type="EMBL" id="AE017221">
    <property type="protein sequence ID" value="AAS80608.1"/>
    <property type="molecule type" value="Genomic_DNA"/>
</dbReference>
<dbReference type="RefSeq" id="WP_011172711.1">
    <property type="nucleotide sequence ID" value="NC_005835.1"/>
</dbReference>
<dbReference type="SMR" id="Q72L05"/>
<dbReference type="GeneID" id="3169755"/>
<dbReference type="KEGG" id="tth:TT_C0260"/>
<dbReference type="eggNOG" id="COG2352">
    <property type="taxonomic scope" value="Bacteria"/>
</dbReference>
<dbReference type="HOGENOM" id="CLU_006557_2_0_0"/>
<dbReference type="OrthoDB" id="9768133at2"/>
<dbReference type="Proteomes" id="UP000000592">
    <property type="component" value="Chromosome"/>
</dbReference>
<dbReference type="GO" id="GO:0005829">
    <property type="term" value="C:cytosol"/>
    <property type="evidence" value="ECO:0007669"/>
    <property type="project" value="TreeGrafter"/>
</dbReference>
<dbReference type="GO" id="GO:0000287">
    <property type="term" value="F:magnesium ion binding"/>
    <property type="evidence" value="ECO:0007669"/>
    <property type="project" value="UniProtKB-UniRule"/>
</dbReference>
<dbReference type="GO" id="GO:0008964">
    <property type="term" value="F:phosphoenolpyruvate carboxylase activity"/>
    <property type="evidence" value="ECO:0007669"/>
    <property type="project" value="UniProtKB-UniRule"/>
</dbReference>
<dbReference type="GO" id="GO:0015977">
    <property type="term" value="P:carbon fixation"/>
    <property type="evidence" value="ECO:0007669"/>
    <property type="project" value="UniProtKB-UniRule"/>
</dbReference>
<dbReference type="GO" id="GO:0006107">
    <property type="term" value="P:oxaloacetate metabolic process"/>
    <property type="evidence" value="ECO:0007669"/>
    <property type="project" value="UniProtKB-UniRule"/>
</dbReference>
<dbReference type="GO" id="GO:0006099">
    <property type="term" value="P:tricarboxylic acid cycle"/>
    <property type="evidence" value="ECO:0007669"/>
    <property type="project" value="InterPro"/>
</dbReference>
<dbReference type="HAMAP" id="MF_00595">
    <property type="entry name" value="PEPcase_type1"/>
    <property type="match status" value="1"/>
</dbReference>
<dbReference type="InterPro" id="IPR021135">
    <property type="entry name" value="PEP_COase"/>
</dbReference>
<dbReference type="InterPro" id="IPR022805">
    <property type="entry name" value="PEP_COase_bac/pln-type"/>
</dbReference>
<dbReference type="InterPro" id="IPR018129">
    <property type="entry name" value="PEP_COase_Lys_AS"/>
</dbReference>
<dbReference type="InterPro" id="IPR033129">
    <property type="entry name" value="PEPCASE_His_AS"/>
</dbReference>
<dbReference type="InterPro" id="IPR015813">
    <property type="entry name" value="Pyrv/PenolPyrv_kinase-like_dom"/>
</dbReference>
<dbReference type="PANTHER" id="PTHR30523">
    <property type="entry name" value="PHOSPHOENOLPYRUVATE CARBOXYLASE"/>
    <property type="match status" value="1"/>
</dbReference>
<dbReference type="PANTHER" id="PTHR30523:SF6">
    <property type="entry name" value="PHOSPHOENOLPYRUVATE CARBOXYLASE"/>
    <property type="match status" value="1"/>
</dbReference>
<dbReference type="Pfam" id="PF00311">
    <property type="entry name" value="PEPcase"/>
    <property type="match status" value="1"/>
</dbReference>
<dbReference type="PRINTS" id="PR00150">
    <property type="entry name" value="PEPCARBXLASE"/>
</dbReference>
<dbReference type="SUPFAM" id="SSF51621">
    <property type="entry name" value="Phosphoenolpyruvate/pyruvate domain"/>
    <property type="match status" value="1"/>
</dbReference>
<dbReference type="PROSITE" id="PS00781">
    <property type="entry name" value="PEPCASE_1"/>
    <property type="match status" value="1"/>
</dbReference>
<dbReference type="PROSITE" id="PS00393">
    <property type="entry name" value="PEPCASE_2"/>
    <property type="match status" value="1"/>
</dbReference>
<protein>
    <recommendedName>
        <fullName evidence="1">Phosphoenolpyruvate carboxylase</fullName>
        <shortName evidence="1">PEPC</shortName>
        <shortName evidence="1">PEPCase</shortName>
        <ecNumber evidence="1">4.1.1.31</ecNumber>
    </recommendedName>
</protein>
<gene>
    <name evidence="1" type="primary">ppc</name>
    <name type="ordered locus">TT_C0260</name>
</gene>
<accession>Q72L05</accession>
<keyword id="KW-0120">Carbon dioxide fixation</keyword>
<keyword id="KW-0456">Lyase</keyword>
<keyword id="KW-0460">Magnesium</keyword>